<evidence type="ECO:0000255" key="1">
    <source>
        <dbReference type="HAMAP-Rule" id="MF_01358"/>
    </source>
</evidence>
<proteinExistence type="inferred from homology"/>
<reference key="1">
    <citation type="journal article" date="2005" name="Proc. Natl. Acad. Sci. U.S.A.">
        <title>The genome of the heartwater agent Ehrlichia ruminantium contains multiple tandem repeats of actively variable copy number.</title>
        <authorList>
            <person name="Collins N.E."/>
            <person name="Liebenberg J."/>
            <person name="de Villiers E.P."/>
            <person name="Brayton K.A."/>
            <person name="Louw E."/>
            <person name="Pretorius A."/>
            <person name="Faber F.E."/>
            <person name="van Heerden H."/>
            <person name="Josemans A."/>
            <person name="van Kleef M."/>
            <person name="Steyn H.C."/>
            <person name="van Strijp M.F."/>
            <person name="Zweygarth E."/>
            <person name="Jongejan F."/>
            <person name="Maillard J.C."/>
            <person name="Berthier D."/>
            <person name="Botha M."/>
            <person name="Joubert F."/>
            <person name="Corton C.H."/>
            <person name="Thomson N.R."/>
            <person name="Allsopp M.T."/>
            <person name="Allsopp B.A."/>
        </authorList>
    </citation>
    <scope>NUCLEOTIDE SEQUENCE [LARGE SCALE GENOMIC DNA]</scope>
    <source>
        <strain>Welgevonden</strain>
    </source>
</reference>
<reference key="2">
    <citation type="journal article" date="2006" name="J. Bacteriol.">
        <title>Comparative genomic analysis of three strains of Ehrlichia ruminantium reveals an active process of genome size plasticity.</title>
        <authorList>
            <person name="Frutos R."/>
            <person name="Viari A."/>
            <person name="Ferraz C."/>
            <person name="Morgat A."/>
            <person name="Eychenie S."/>
            <person name="Kandassamy Y."/>
            <person name="Chantal I."/>
            <person name="Bensaid A."/>
            <person name="Coissac E."/>
            <person name="Vachiery N."/>
            <person name="Demaille J."/>
            <person name="Martinez D."/>
        </authorList>
    </citation>
    <scope>NUCLEOTIDE SEQUENCE [LARGE SCALE GENOMIC DNA]</scope>
    <source>
        <strain>Welgevonden</strain>
    </source>
</reference>
<feature type="chain" id="PRO_0000357812" description="NADH-quinone oxidoreductase subunit D">
    <location>
        <begin position="1"/>
        <end position="393"/>
    </location>
</feature>
<comment type="function">
    <text evidence="1">NDH-1 shuttles electrons from NADH, via FMN and iron-sulfur (Fe-S) centers, to quinones in the respiratory chain. The immediate electron acceptor for the enzyme in this species is believed to be ubiquinone. Couples the redox reaction to proton translocation (for every two electrons transferred, four hydrogen ions are translocated across the cytoplasmic membrane), and thus conserves the redox energy in a proton gradient.</text>
</comment>
<comment type="catalytic activity">
    <reaction evidence="1">
        <text>a quinone + NADH + 5 H(+)(in) = a quinol + NAD(+) + 4 H(+)(out)</text>
        <dbReference type="Rhea" id="RHEA:57888"/>
        <dbReference type="ChEBI" id="CHEBI:15378"/>
        <dbReference type="ChEBI" id="CHEBI:24646"/>
        <dbReference type="ChEBI" id="CHEBI:57540"/>
        <dbReference type="ChEBI" id="CHEBI:57945"/>
        <dbReference type="ChEBI" id="CHEBI:132124"/>
    </reaction>
</comment>
<comment type="subunit">
    <text evidence="1">NDH-1 is composed of 14 different subunits. Subunits NuoB, C, D, E, F, and G constitute the peripheral sector of the complex.</text>
</comment>
<comment type="subcellular location">
    <subcellularLocation>
        <location evidence="1">Cell inner membrane</location>
        <topology evidence="1">Peripheral membrane protein</topology>
        <orientation evidence="1">Cytoplasmic side</orientation>
    </subcellularLocation>
</comment>
<comment type="similarity">
    <text evidence="1">Belongs to the complex I 49 kDa subunit family.</text>
</comment>
<keyword id="KW-0997">Cell inner membrane</keyword>
<keyword id="KW-1003">Cell membrane</keyword>
<keyword id="KW-0472">Membrane</keyword>
<keyword id="KW-0520">NAD</keyword>
<keyword id="KW-0874">Quinone</keyword>
<keyword id="KW-1278">Translocase</keyword>
<keyword id="KW-0813">Transport</keyword>
<keyword id="KW-0830">Ubiquinone</keyword>
<dbReference type="EC" id="7.1.1.-" evidence="1"/>
<dbReference type="EMBL" id="CR767821">
    <property type="protein sequence ID" value="CAH58168.1"/>
    <property type="molecule type" value="Genomic_DNA"/>
</dbReference>
<dbReference type="EMBL" id="CR925678">
    <property type="protein sequence ID" value="CAI26956.1"/>
    <property type="molecule type" value="Genomic_DNA"/>
</dbReference>
<dbReference type="RefSeq" id="WP_011155123.1">
    <property type="nucleotide sequence ID" value="NC_005295.2"/>
</dbReference>
<dbReference type="SMR" id="Q5HB88"/>
<dbReference type="GeneID" id="33058445"/>
<dbReference type="KEGG" id="eru:Erum4420"/>
<dbReference type="KEGG" id="erw:ERWE_CDS_04620"/>
<dbReference type="eggNOG" id="COG0649">
    <property type="taxonomic scope" value="Bacteria"/>
</dbReference>
<dbReference type="HOGENOM" id="CLU_015134_1_2_5"/>
<dbReference type="Proteomes" id="UP000001021">
    <property type="component" value="Chromosome"/>
</dbReference>
<dbReference type="GO" id="GO:0005886">
    <property type="term" value="C:plasma membrane"/>
    <property type="evidence" value="ECO:0007669"/>
    <property type="project" value="UniProtKB-SubCell"/>
</dbReference>
<dbReference type="GO" id="GO:0051287">
    <property type="term" value="F:NAD binding"/>
    <property type="evidence" value="ECO:0007669"/>
    <property type="project" value="InterPro"/>
</dbReference>
<dbReference type="GO" id="GO:0050136">
    <property type="term" value="F:NADH:ubiquinone reductase (non-electrogenic) activity"/>
    <property type="evidence" value="ECO:0007669"/>
    <property type="project" value="UniProtKB-UniRule"/>
</dbReference>
<dbReference type="GO" id="GO:0048038">
    <property type="term" value="F:quinone binding"/>
    <property type="evidence" value="ECO:0007669"/>
    <property type="project" value="UniProtKB-KW"/>
</dbReference>
<dbReference type="FunFam" id="1.10.645.10:FF:000005">
    <property type="entry name" value="NADH-quinone oxidoreductase subunit D"/>
    <property type="match status" value="1"/>
</dbReference>
<dbReference type="Gene3D" id="1.10.645.10">
    <property type="entry name" value="Cytochrome-c3 Hydrogenase, chain B"/>
    <property type="match status" value="1"/>
</dbReference>
<dbReference type="HAMAP" id="MF_01358">
    <property type="entry name" value="NDH1_NuoD"/>
    <property type="match status" value="1"/>
</dbReference>
<dbReference type="InterPro" id="IPR001135">
    <property type="entry name" value="NADH_Q_OxRdtase_suD"/>
</dbReference>
<dbReference type="InterPro" id="IPR014029">
    <property type="entry name" value="NADH_UbQ_OxRdtase_49kDa_CS"/>
</dbReference>
<dbReference type="InterPro" id="IPR022885">
    <property type="entry name" value="NDH1_su_D/H"/>
</dbReference>
<dbReference type="InterPro" id="IPR029014">
    <property type="entry name" value="NiFe-Hase_large"/>
</dbReference>
<dbReference type="NCBIfam" id="TIGR01962">
    <property type="entry name" value="NuoD"/>
    <property type="match status" value="1"/>
</dbReference>
<dbReference type="NCBIfam" id="NF004739">
    <property type="entry name" value="PRK06075.1"/>
    <property type="match status" value="1"/>
</dbReference>
<dbReference type="PANTHER" id="PTHR11993:SF10">
    <property type="entry name" value="NADH DEHYDROGENASE [UBIQUINONE] IRON-SULFUR PROTEIN 2, MITOCHONDRIAL"/>
    <property type="match status" value="1"/>
</dbReference>
<dbReference type="PANTHER" id="PTHR11993">
    <property type="entry name" value="NADH-UBIQUINONE OXIDOREDUCTASE 49 KDA SUBUNIT"/>
    <property type="match status" value="1"/>
</dbReference>
<dbReference type="Pfam" id="PF00346">
    <property type="entry name" value="Complex1_49kDa"/>
    <property type="match status" value="1"/>
</dbReference>
<dbReference type="SUPFAM" id="SSF56762">
    <property type="entry name" value="HydB/Nqo4-like"/>
    <property type="match status" value="1"/>
</dbReference>
<dbReference type="PROSITE" id="PS00535">
    <property type="entry name" value="COMPLEX1_49K"/>
    <property type="match status" value="1"/>
</dbReference>
<name>NUOD_EHRRW</name>
<accession>Q5HB88</accession>
<accession>Q5FEL0</accession>
<gene>
    <name evidence="1" type="primary">nuoD</name>
    <name type="ordered locus">Erum4420</name>
    <name type="ordered locus">ERWE_CDS_04620</name>
</gene>
<sequence>MSDHVKITPMTLNFGPQHPAAHGVMRLVLEMGGEVIERIDPHIGLLHRGTEKLIEYKTYLQALPYFDRLDYVSPMAQEHAYSLCVEKLLKCEVPIRAKYLRVIFCELTRILNHLLNISSQALDIGAMTPLLWMFEEREKILNFYERASGARFHSAYIRPGGVAADIPEDLIHDIFQFVNTFPKFMDDVDSLLTENRIWKQRNVDIGVVSKKQALNWGFSGPMLRACGIPWDLRKSQPYEIYDELEFKIPIGEKGDCYDRYLVRMAEIRESIRLVEQCLNRIPDGPVKTDDRKIAPPKRSEMKKSMEALIHHFKLYSEGYSVPAGETYMAVEAPKGEFGVYIVSDGTNKPYRCRIRAPGFAHLQAIDMMAKGHMLADLTAIIGSLDIVFGEIDR</sequence>
<protein>
    <recommendedName>
        <fullName evidence="1">NADH-quinone oxidoreductase subunit D</fullName>
        <ecNumber evidence="1">7.1.1.-</ecNumber>
    </recommendedName>
    <alternativeName>
        <fullName evidence="1">NADH dehydrogenase I subunit D</fullName>
    </alternativeName>
    <alternativeName>
        <fullName evidence="1">NDH-1 subunit D</fullName>
    </alternativeName>
</protein>
<organism>
    <name type="scientific">Ehrlichia ruminantium (strain Welgevonden)</name>
    <dbReference type="NCBI Taxonomy" id="254945"/>
    <lineage>
        <taxon>Bacteria</taxon>
        <taxon>Pseudomonadati</taxon>
        <taxon>Pseudomonadota</taxon>
        <taxon>Alphaproteobacteria</taxon>
        <taxon>Rickettsiales</taxon>
        <taxon>Anaplasmataceae</taxon>
        <taxon>Ehrlichia</taxon>
    </lineage>
</organism>